<accession>A9R5U4</accession>
<comment type="function">
    <text evidence="1">F(1)F(0) ATP synthase produces ATP from ADP in the presence of a proton or sodium gradient. F-type ATPases consist of two structural domains, F(1) containing the extramembraneous catalytic core and F(0) containing the membrane proton channel, linked together by a central stalk and a peripheral stalk. During catalysis, ATP synthesis in the catalytic domain of F(1) is coupled via a rotary mechanism of the central stalk subunits to proton translocation.</text>
</comment>
<comment type="function">
    <text evidence="1">Key component of the F(0) channel; it plays a direct role in translocation across the membrane. A homomeric c-ring of between 10-14 subunits forms the central stalk rotor element with the F(1) delta and epsilon subunits.</text>
</comment>
<comment type="subunit">
    <text evidence="1">F-type ATPases have 2 components, F(1) - the catalytic core - and F(0) - the membrane proton channel. F(1) has five subunits: alpha(3), beta(3), gamma(1), delta(1), epsilon(1). F(0) has three main subunits: a(1), b(2) and c(10-14). The alpha and beta chains form an alternating ring which encloses part of the gamma chain. F(1) is attached to F(0) by a central stalk formed by the gamma and epsilon chains, while a peripheral stalk is formed by the delta and b chains.</text>
</comment>
<comment type="subcellular location">
    <subcellularLocation>
        <location evidence="1">Cell inner membrane</location>
        <topology evidence="1">Multi-pass membrane protein</topology>
    </subcellularLocation>
</comment>
<comment type="similarity">
    <text evidence="1">Belongs to the ATPase C chain family.</text>
</comment>
<evidence type="ECO:0000255" key="1">
    <source>
        <dbReference type="HAMAP-Rule" id="MF_01396"/>
    </source>
</evidence>
<organism>
    <name type="scientific">Yersinia pestis bv. Antiqua (strain Angola)</name>
    <dbReference type="NCBI Taxonomy" id="349746"/>
    <lineage>
        <taxon>Bacteria</taxon>
        <taxon>Pseudomonadati</taxon>
        <taxon>Pseudomonadota</taxon>
        <taxon>Gammaproteobacteria</taxon>
        <taxon>Enterobacterales</taxon>
        <taxon>Yersiniaceae</taxon>
        <taxon>Yersinia</taxon>
    </lineage>
</organism>
<reference key="1">
    <citation type="journal article" date="2010" name="J. Bacteriol.">
        <title>Genome sequence of the deep-rooted Yersinia pestis strain Angola reveals new insights into the evolution and pangenome of the plague bacterium.</title>
        <authorList>
            <person name="Eppinger M."/>
            <person name="Worsham P.L."/>
            <person name="Nikolich M.P."/>
            <person name="Riley D.R."/>
            <person name="Sebastian Y."/>
            <person name="Mou S."/>
            <person name="Achtman M."/>
            <person name="Lindler L.E."/>
            <person name="Ravel J."/>
        </authorList>
    </citation>
    <scope>NUCLEOTIDE SEQUENCE [LARGE SCALE GENOMIC DNA]</scope>
    <source>
        <strain>Angola</strain>
    </source>
</reference>
<protein>
    <recommendedName>
        <fullName evidence="1">ATP synthase subunit c</fullName>
    </recommendedName>
    <alternativeName>
        <fullName evidence="1">ATP synthase F(0) sector subunit c</fullName>
    </alternativeName>
    <alternativeName>
        <fullName evidence="1">F-type ATPase subunit c</fullName>
        <shortName evidence="1">F-ATPase subunit c</shortName>
    </alternativeName>
    <alternativeName>
        <fullName evidence="1">Lipid-binding protein</fullName>
    </alternativeName>
</protein>
<gene>
    <name evidence="1" type="primary">atpE</name>
    <name type="ordered locus">YpAngola_A4207</name>
</gene>
<dbReference type="EMBL" id="CP000901">
    <property type="protein sequence ID" value="ABX86731.1"/>
    <property type="molecule type" value="Genomic_DNA"/>
</dbReference>
<dbReference type="RefSeq" id="WP_000429386.1">
    <property type="nucleotide sequence ID" value="NZ_CP009935.1"/>
</dbReference>
<dbReference type="SMR" id="A9R5U4"/>
<dbReference type="GeneID" id="98390858"/>
<dbReference type="KEGG" id="ypg:YpAngola_A4207"/>
<dbReference type="PATRIC" id="fig|349746.12.peg.944"/>
<dbReference type="GO" id="GO:0005886">
    <property type="term" value="C:plasma membrane"/>
    <property type="evidence" value="ECO:0007669"/>
    <property type="project" value="UniProtKB-SubCell"/>
</dbReference>
<dbReference type="GO" id="GO:0045259">
    <property type="term" value="C:proton-transporting ATP synthase complex"/>
    <property type="evidence" value="ECO:0007669"/>
    <property type="project" value="UniProtKB-KW"/>
</dbReference>
<dbReference type="GO" id="GO:0033177">
    <property type="term" value="C:proton-transporting two-sector ATPase complex, proton-transporting domain"/>
    <property type="evidence" value="ECO:0007669"/>
    <property type="project" value="InterPro"/>
</dbReference>
<dbReference type="GO" id="GO:0008289">
    <property type="term" value="F:lipid binding"/>
    <property type="evidence" value="ECO:0007669"/>
    <property type="project" value="UniProtKB-KW"/>
</dbReference>
<dbReference type="GO" id="GO:0046933">
    <property type="term" value="F:proton-transporting ATP synthase activity, rotational mechanism"/>
    <property type="evidence" value="ECO:0007669"/>
    <property type="project" value="UniProtKB-UniRule"/>
</dbReference>
<dbReference type="CDD" id="cd18185">
    <property type="entry name" value="ATP-synt_Fo_c_ATPE"/>
    <property type="match status" value="1"/>
</dbReference>
<dbReference type="FunFam" id="1.20.20.10:FF:000002">
    <property type="entry name" value="ATP synthase subunit c"/>
    <property type="match status" value="1"/>
</dbReference>
<dbReference type="Gene3D" id="1.20.20.10">
    <property type="entry name" value="F1F0 ATP synthase subunit C"/>
    <property type="match status" value="1"/>
</dbReference>
<dbReference type="HAMAP" id="MF_01396">
    <property type="entry name" value="ATP_synth_c_bact"/>
    <property type="match status" value="1"/>
</dbReference>
<dbReference type="InterPro" id="IPR005953">
    <property type="entry name" value="ATP_synth_csu_bac/chlpt"/>
</dbReference>
<dbReference type="InterPro" id="IPR000454">
    <property type="entry name" value="ATP_synth_F0_csu"/>
</dbReference>
<dbReference type="InterPro" id="IPR020537">
    <property type="entry name" value="ATP_synth_F0_csu_DDCD_BS"/>
</dbReference>
<dbReference type="InterPro" id="IPR038662">
    <property type="entry name" value="ATP_synth_F0_csu_sf"/>
</dbReference>
<dbReference type="InterPro" id="IPR002379">
    <property type="entry name" value="ATPase_proteolipid_c-like_dom"/>
</dbReference>
<dbReference type="InterPro" id="IPR035921">
    <property type="entry name" value="F/V-ATP_Csub_sf"/>
</dbReference>
<dbReference type="NCBIfam" id="TIGR01260">
    <property type="entry name" value="ATP_synt_c"/>
    <property type="match status" value="1"/>
</dbReference>
<dbReference type="NCBIfam" id="NF005363">
    <property type="entry name" value="PRK06876.1"/>
    <property type="match status" value="1"/>
</dbReference>
<dbReference type="Pfam" id="PF00137">
    <property type="entry name" value="ATP-synt_C"/>
    <property type="match status" value="1"/>
</dbReference>
<dbReference type="PRINTS" id="PR00124">
    <property type="entry name" value="ATPASEC"/>
</dbReference>
<dbReference type="SUPFAM" id="SSF81333">
    <property type="entry name" value="F1F0 ATP synthase subunit C"/>
    <property type="match status" value="1"/>
</dbReference>
<dbReference type="PROSITE" id="PS00605">
    <property type="entry name" value="ATPASE_C"/>
    <property type="match status" value="1"/>
</dbReference>
<sequence>MENLNMDLLYMAAAVMMGLAAIGAAIGIGILGGKFLEGAARQPDLIPLLRTQFFIVMGLVDAIPMIAVGLGLYVMFAVA</sequence>
<keyword id="KW-0066">ATP synthesis</keyword>
<keyword id="KW-0997">Cell inner membrane</keyword>
<keyword id="KW-1003">Cell membrane</keyword>
<keyword id="KW-0138">CF(0)</keyword>
<keyword id="KW-0375">Hydrogen ion transport</keyword>
<keyword id="KW-0406">Ion transport</keyword>
<keyword id="KW-0446">Lipid-binding</keyword>
<keyword id="KW-0472">Membrane</keyword>
<keyword id="KW-0812">Transmembrane</keyword>
<keyword id="KW-1133">Transmembrane helix</keyword>
<keyword id="KW-0813">Transport</keyword>
<name>ATPL_YERPG</name>
<proteinExistence type="inferred from homology"/>
<feature type="chain" id="PRO_1000184542" description="ATP synthase subunit c">
    <location>
        <begin position="1"/>
        <end position="79"/>
    </location>
</feature>
<feature type="transmembrane region" description="Helical" evidence="1">
    <location>
        <begin position="11"/>
        <end position="31"/>
    </location>
</feature>
<feature type="transmembrane region" description="Helical" evidence="1">
    <location>
        <begin position="53"/>
        <end position="73"/>
    </location>
</feature>
<feature type="site" description="Reversibly protonated during proton transport" evidence="1">
    <location>
        <position position="61"/>
    </location>
</feature>